<comment type="function">
    <text evidence="1">Catalyzes oxygen-dependent 5-hydroxyuridine (ho5U) modification at position 34 in tRNAs.</text>
</comment>
<comment type="catalytic activity">
    <reaction evidence="1">
        <text>uridine(34) in tRNA + AH2 + O2 = 5-hydroxyuridine(34) in tRNA + A + H2O</text>
        <dbReference type="Rhea" id="RHEA:64224"/>
        <dbReference type="Rhea" id="RHEA-COMP:11727"/>
        <dbReference type="Rhea" id="RHEA-COMP:13381"/>
        <dbReference type="ChEBI" id="CHEBI:13193"/>
        <dbReference type="ChEBI" id="CHEBI:15377"/>
        <dbReference type="ChEBI" id="CHEBI:15379"/>
        <dbReference type="ChEBI" id="CHEBI:17499"/>
        <dbReference type="ChEBI" id="CHEBI:65315"/>
        <dbReference type="ChEBI" id="CHEBI:136877"/>
    </reaction>
</comment>
<comment type="similarity">
    <text evidence="1">Belongs to the TrhO family.</text>
</comment>
<accession>A7Z0Z7</accession>
<reference key="1">
    <citation type="journal article" date="2007" name="Nat. Biotechnol.">
        <title>Comparative analysis of the complete genome sequence of the plant growth-promoting bacterium Bacillus amyloliquefaciens FZB42.</title>
        <authorList>
            <person name="Chen X.H."/>
            <person name="Koumoutsi A."/>
            <person name="Scholz R."/>
            <person name="Eisenreich A."/>
            <person name="Schneider K."/>
            <person name="Heinemeyer I."/>
            <person name="Morgenstern B."/>
            <person name="Voss B."/>
            <person name="Hess W.R."/>
            <person name="Reva O."/>
            <person name="Junge H."/>
            <person name="Voigt B."/>
            <person name="Jungblut P.R."/>
            <person name="Vater J."/>
            <person name="Suessmuth R."/>
            <person name="Liesegang H."/>
            <person name="Strittmatter A."/>
            <person name="Gottschalk G."/>
            <person name="Borriss R."/>
        </authorList>
    </citation>
    <scope>NUCLEOTIDE SEQUENCE [LARGE SCALE GENOMIC DNA]</scope>
    <source>
        <strain>DSM 23117 / BGSC 10A6 / LMG 26770 / FZB42</strain>
    </source>
</reference>
<name>TRHO_BACVZ</name>
<keyword id="KW-0560">Oxidoreductase</keyword>
<keyword id="KW-0819">tRNA processing</keyword>
<evidence type="ECO:0000255" key="1">
    <source>
        <dbReference type="HAMAP-Rule" id="MF_00469"/>
    </source>
</evidence>
<sequence>MEKQYRVLLYYKYVKIDEPEEFTAQHLKFCKELGLLGRILISEEGINGTVSGTVEQTEQYMNALKADPRFADMPIKIDEADGHAFRKMFVRHKKELVTLRLEDDVDPNVTTGKHLKPKDFYEQMQDPDTIVIDARNDYEYDLGHFRGAVRPDIEAFRELPDWIEEHKDMLEGKKILTYCTGGVRCEKFSGWLLKKGFEDVSQLDGGIVTYGKDPEVKGQMWDGQCYVFDERISVPVNRVEHVIIGKDYFTGEPCERYVNCANPACNKKMICTPENEYKYMRSCSHECRTNERNMYVKEHDMTQEEINERLALIEKEDHAAID</sequence>
<gene>
    <name evidence="1" type="primary">trhO</name>
    <name type="ordered locus">RBAM_002740</name>
</gene>
<organism>
    <name type="scientific">Bacillus velezensis (strain DSM 23117 / BGSC 10A6 / LMG 26770 / FZB42)</name>
    <name type="common">Bacillus amyloliquefaciens subsp. plantarum</name>
    <dbReference type="NCBI Taxonomy" id="326423"/>
    <lineage>
        <taxon>Bacteria</taxon>
        <taxon>Bacillati</taxon>
        <taxon>Bacillota</taxon>
        <taxon>Bacilli</taxon>
        <taxon>Bacillales</taxon>
        <taxon>Bacillaceae</taxon>
        <taxon>Bacillus</taxon>
        <taxon>Bacillus amyloliquefaciens group</taxon>
    </lineage>
</organism>
<protein>
    <recommendedName>
        <fullName evidence="1">tRNA uridine(34) hydroxylase</fullName>
        <ecNumber evidence="1">1.14.-.-</ecNumber>
    </recommendedName>
    <alternativeName>
        <fullName evidence="1">tRNA hydroxylation protein O</fullName>
    </alternativeName>
</protein>
<dbReference type="EC" id="1.14.-.-" evidence="1"/>
<dbReference type="EMBL" id="CP000560">
    <property type="protein sequence ID" value="ABS72673.1"/>
    <property type="molecule type" value="Genomic_DNA"/>
</dbReference>
<dbReference type="RefSeq" id="WP_011996254.1">
    <property type="nucleotide sequence ID" value="NC_009725.2"/>
</dbReference>
<dbReference type="SMR" id="A7Z0Z7"/>
<dbReference type="GeneID" id="93079412"/>
<dbReference type="KEGG" id="bay:RBAM_002740"/>
<dbReference type="HOGENOM" id="CLU_038878_1_0_9"/>
<dbReference type="Proteomes" id="UP000001120">
    <property type="component" value="Chromosome"/>
</dbReference>
<dbReference type="GO" id="GO:0016705">
    <property type="term" value="F:oxidoreductase activity, acting on paired donors, with incorporation or reduction of molecular oxygen"/>
    <property type="evidence" value="ECO:0007669"/>
    <property type="project" value="UniProtKB-UniRule"/>
</dbReference>
<dbReference type="GO" id="GO:0006400">
    <property type="term" value="P:tRNA modification"/>
    <property type="evidence" value="ECO:0007669"/>
    <property type="project" value="UniProtKB-UniRule"/>
</dbReference>
<dbReference type="CDD" id="cd01518">
    <property type="entry name" value="RHOD_YceA"/>
    <property type="match status" value="1"/>
</dbReference>
<dbReference type="Gene3D" id="3.30.70.100">
    <property type="match status" value="1"/>
</dbReference>
<dbReference type="Gene3D" id="3.40.250.10">
    <property type="entry name" value="Rhodanese-like domain"/>
    <property type="match status" value="1"/>
</dbReference>
<dbReference type="HAMAP" id="MF_00469">
    <property type="entry name" value="TrhO"/>
    <property type="match status" value="1"/>
</dbReference>
<dbReference type="InterPro" id="IPR001763">
    <property type="entry name" value="Rhodanese-like_dom"/>
</dbReference>
<dbReference type="InterPro" id="IPR036873">
    <property type="entry name" value="Rhodanese-like_dom_sf"/>
</dbReference>
<dbReference type="InterPro" id="IPR022111">
    <property type="entry name" value="Rhodanese_C"/>
</dbReference>
<dbReference type="InterPro" id="IPR020936">
    <property type="entry name" value="TrhO"/>
</dbReference>
<dbReference type="InterPro" id="IPR040503">
    <property type="entry name" value="TRHO_N"/>
</dbReference>
<dbReference type="NCBIfam" id="NF001135">
    <property type="entry name" value="PRK00142.1-3"/>
    <property type="match status" value="1"/>
</dbReference>
<dbReference type="PANTHER" id="PTHR43268:SF3">
    <property type="entry name" value="RHODANESE-LIKE DOMAIN-CONTAINING PROTEIN 7-RELATED"/>
    <property type="match status" value="1"/>
</dbReference>
<dbReference type="PANTHER" id="PTHR43268">
    <property type="entry name" value="THIOSULFATE SULFURTRANSFERASE/RHODANESE-LIKE DOMAIN-CONTAINING PROTEIN 2"/>
    <property type="match status" value="1"/>
</dbReference>
<dbReference type="Pfam" id="PF00581">
    <property type="entry name" value="Rhodanese"/>
    <property type="match status" value="1"/>
</dbReference>
<dbReference type="Pfam" id="PF12368">
    <property type="entry name" value="Rhodanese_C"/>
    <property type="match status" value="1"/>
</dbReference>
<dbReference type="Pfam" id="PF17773">
    <property type="entry name" value="UPF0176_N"/>
    <property type="match status" value="1"/>
</dbReference>
<dbReference type="SMART" id="SM00450">
    <property type="entry name" value="RHOD"/>
    <property type="match status" value="1"/>
</dbReference>
<dbReference type="SUPFAM" id="SSF52821">
    <property type="entry name" value="Rhodanese/Cell cycle control phosphatase"/>
    <property type="match status" value="1"/>
</dbReference>
<dbReference type="PROSITE" id="PS50206">
    <property type="entry name" value="RHODANESE_3"/>
    <property type="match status" value="1"/>
</dbReference>
<proteinExistence type="inferred from homology"/>
<feature type="chain" id="PRO_1000013721" description="tRNA uridine(34) hydroxylase">
    <location>
        <begin position="1"/>
        <end position="322"/>
    </location>
</feature>
<feature type="domain" description="Rhodanese" evidence="1">
    <location>
        <begin position="125"/>
        <end position="219"/>
    </location>
</feature>
<feature type="active site" description="Cysteine persulfide intermediate" evidence="1">
    <location>
        <position position="179"/>
    </location>
</feature>